<accession>Q4ZZG8</accession>
<dbReference type="EMBL" id="CP000075">
    <property type="protein sequence ID" value="AAY35454.1"/>
    <property type="molecule type" value="Genomic_DNA"/>
</dbReference>
<dbReference type="RefSeq" id="WP_003316632.1">
    <property type="nucleotide sequence ID" value="NC_007005.1"/>
</dbReference>
<dbReference type="RefSeq" id="YP_233492.1">
    <property type="nucleotide sequence ID" value="NC_007005.1"/>
</dbReference>
<dbReference type="SMR" id="Q4ZZG8"/>
<dbReference type="STRING" id="205918.Psyr_0384"/>
<dbReference type="KEGG" id="psb:Psyr_0384"/>
<dbReference type="PATRIC" id="fig|205918.7.peg.397"/>
<dbReference type="eggNOG" id="COG1826">
    <property type="taxonomic scope" value="Bacteria"/>
</dbReference>
<dbReference type="HOGENOM" id="CLU_086034_5_1_6"/>
<dbReference type="Proteomes" id="UP000000426">
    <property type="component" value="Chromosome"/>
</dbReference>
<dbReference type="GO" id="GO:0033281">
    <property type="term" value="C:TAT protein transport complex"/>
    <property type="evidence" value="ECO:0007669"/>
    <property type="project" value="UniProtKB-UniRule"/>
</dbReference>
<dbReference type="GO" id="GO:0008320">
    <property type="term" value="F:protein transmembrane transporter activity"/>
    <property type="evidence" value="ECO:0007669"/>
    <property type="project" value="UniProtKB-UniRule"/>
</dbReference>
<dbReference type="GO" id="GO:0043953">
    <property type="term" value="P:protein transport by the Tat complex"/>
    <property type="evidence" value="ECO:0007669"/>
    <property type="project" value="UniProtKB-UniRule"/>
</dbReference>
<dbReference type="FunFam" id="1.20.5.3310:FF:000001">
    <property type="entry name" value="Probable Sec-independent protein translocase protein TatE"/>
    <property type="match status" value="1"/>
</dbReference>
<dbReference type="Gene3D" id="1.20.5.3310">
    <property type="match status" value="1"/>
</dbReference>
<dbReference type="HAMAP" id="MF_00236">
    <property type="entry name" value="TatA_E"/>
    <property type="match status" value="1"/>
</dbReference>
<dbReference type="InterPro" id="IPR003369">
    <property type="entry name" value="TatA/B/E"/>
</dbReference>
<dbReference type="InterPro" id="IPR006312">
    <property type="entry name" value="TatA/E"/>
</dbReference>
<dbReference type="NCBIfam" id="NF001681">
    <property type="entry name" value="PRK00442.1"/>
    <property type="match status" value="1"/>
</dbReference>
<dbReference type="NCBIfam" id="TIGR01411">
    <property type="entry name" value="tatAE"/>
    <property type="match status" value="1"/>
</dbReference>
<dbReference type="PANTHER" id="PTHR42982">
    <property type="entry name" value="SEC-INDEPENDENT PROTEIN TRANSLOCASE PROTEIN TATA"/>
    <property type="match status" value="1"/>
</dbReference>
<dbReference type="PANTHER" id="PTHR42982:SF1">
    <property type="entry name" value="SEC-INDEPENDENT PROTEIN TRANSLOCASE PROTEIN TATA"/>
    <property type="match status" value="1"/>
</dbReference>
<dbReference type="Pfam" id="PF02416">
    <property type="entry name" value="TatA_B_E"/>
    <property type="match status" value="1"/>
</dbReference>
<feature type="chain" id="PRO_1000044424" description="Sec-independent protein translocase protein TatA">
    <location>
        <begin position="1"/>
        <end position="91"/>
    </location>
</feature>
<feature type="transmembrane region" description="Helical" evidence="1">
    <location>
        <begin position="1"/>
        <end position="21"/>
    </location>
</feature>
<feature type="region of interest" description="Disordered" evidence="2">
    <location>
        <begin position="41"/>
        <end position="91"/>
    </location>
</feature>
<feature type="compositionally biased region" description="Low complexity" evidence="2">
    <location>
        <begin position="51"/>
        <end position="64"/>
    </location>
</feature>
<feature type="compositionally biased region" description="Basic and acidic residues" evidence="2">
    <location>
        <begin position="78"/>
        <end position="91"/>
    </location>
</feature>
<sequence length="91" mass="10047">MGIFDWKHWIVILIVVVLVFGTKKLKGLGSDVGESIKGFRKAMNDDDKPAEQPAPQPQQAQPAPQGSPLNQPHTIDAQAHKVDEPIRKDQV</sequence>
<organism>
    <name type="scientific">Pseudomonas syringae pv. syringae (strain B728a)</name>
    <dbReference type="NCBI Taxonomy" id="205918"/>
    <lineage>
        <taxon>Bacteria</taxon>
        <taxon>Pseudomonadati</taxon>
        <taxon>Pseudomonadota</taxon>
        <taxon>Gammaproteobacteria</taxon>
        <taxon>Pseudomonadales</taxon>
        <taxon>Pseudomonadaceae</taxon>
        <taxon>Pseudomonas</taxon>
        <taxon>Pseudomonas syringae</taxon>
    </lineage>
</organism>
<evidence type="ECO:0000255" key="1">
    <source>
        <dbReference type="HAMAP-Rule" id="MF_00236"/>
    </source>
</evidence>
<evidence type="ECO:0000256" key="2">
    <source>
        <dbReference type="SAM" id="MobiDB-lite"/>
    </source>
</evidence>
<comment type="function">
    <text evidence="1">Part of the twin-arginine translocation (Tat) system that transports large folded proteins containing a characteristic twin-arginine motif in their signal peptide across membranes. TatA could form the protein-conducting channel of the Tat system.</text>
</comment>
<comment type="subunit">
    <text evidence="1">The Tat system comprises two distinct complexes: a TatABC complex, containing multiple copies of TatA, TatB and TatC subunits, and a separate TatA complex, containing only TatA subunits. Substrates initially bind to the TatABC complex, which probably triggers association of the separate TatA complex to form the active translocon.</text>
</comment>
<comment type="subcellular location">
    <subcellularLocation>
        <location evidence="1">Cell inner membrane</location>
        <topology evidence="1">Single-pass membrane protein</topology>
    </subcellularLocation>
</comment>
<comment type="similarity">
    <text evidence="1">Belongs to the TatA/E family.</text>
</comment>
<protein>
    <recommendedName>
        <fullName evidence="1">Sec-independent protein translocase protein TatA</fullName>
    </recommendedName>
</protein>
<keyword id="KW-0997">Cell inner membrane</keyword>
<keyword id="KW-1003">Cell membrane</keyword>
<keyword id="KW-0472">Membrane</keyword>
<keyword id="KW-0653">Protein transport</keyword>
<keyword id="KW-0811">Translocation</keyword>
<keyword id="KW-0812">Transmembrane</keyword>
<keyword id="KW-1133">Transmembrane helix</keyword>
<keyword id="KW-0813">Transport</keyword>
<reference key="1">
    <citation type="journal article" date="2005" name="Proc. Natl. Acad. Sci. U.S.A.">
        <title>Comparison of the complete genome sequences of Pseudomonas syringae pv. syringae B728a and pv. tomato DC3000.</title>
        <authorList>
            <person name="Feil H."/>
            <person name="Feil W.S."/>
            <person name="Chain P."/>
            <person name="Larimer F."/>
            <person name="Dibartolo G."/>
            <person name="Copeland A."/>
            <person name="Lykidis A."/>
            <person name="Trong S."/>
            <person name="Nolan M."/>
            <person name="Goltsman E."/>
            <person name="Thiel J."/>
            <person name="Malfatti S."/>
            <person name="Loper J.E."/>
            <person name="Lapidus A."/>
            <person name="Detter J.C."/>
            <person name="Land M."/>
            <person name="Richardson P.M."/>
            <person name="Kyrpides N.C."/>
            <person name="Ivanova N."/>
            <person name="Lindow S.E."/>
        </authorList>
    </citation>
    <scope>NUCLEOTIDE SEQUENCE [LARGE SCALE GENOMIC DNA]</scope>
    <source>
        <strain>B728a</strain>
    </source>
</reference>
<name>TATA_PSEU2</name>
<gene>
    <name evidence="1" type="primary">tatA</name>
    <name type="ordered locus">Psyr_0384</name>
</gene>
<proteinExistence type="inferred from homology"/>